<proteinExistence type="inferred from homology"/>
<evidence type="ECO:0000255" key="1">
    <source>
        <dbReference type="HAMAP-Rule" id="MF_04071"/>
    </source>
</evidence>
<evidence type="ECO:0000256" key="2">
    <source>
        <dbReference type="SAM" id="MobiDB-lite"/>
    </source>
</evidence>
<reference key="1">
    <citation type="journal article" date="2006" name="Science">
        <title>Large-scale sequence analysis of avian influenza isolates.</title>
        <authorList>
            <person name="Obenauer J.C."/>
            <person name="Denson J."/>
            <person name="Mehta P.K."/>
            <person name="Su X."/>
            <person name="Mukatira S."/>
            <person name="Finkelstein D.B."/>
            <person name="Xu X."/>
            <person name="Wang J."/>
            <person name="Ma J."/>
            <person name="Fan Y."/>
            <person name="Rakestraw K.M."/>
            <person name="Webster R.G."/>
            <person name="Hoffmann E."/>
            <person name="Krauss S."/>
            <person name="Zheng J."/>
            <person name="Zhang Z."/>
            <person name="Naeve C.W."/>
        </authorList>
    </citation>
    <scope>NUCLEOTIDE SEQUENCE [GENOMIC RNA]</scope>
</reference>
<reference key="2">
    <citation type="journal article" date="2004" name="Virus Res.">
        <title>Assembly and budding of influenza virus.</title>
        <authorList>
            <person name="Nayak D.P."/>
            <person name="Hui E.K."/>
            <person name="Barman S."/>
        </authorList>
    </citation>
    <scope>REVIEW</scope>
</reference>
<reference key="3">
    <citation type="journal article" date="2005" name="N. Engl. J. Med.">
        <title>Neuraminidase inhibitors for influenza.</title>
        <authorList>
            <person name="Moscona A."/>
        </authorList>
    </citation>
    <scope>REVIEW</scope>
</reference>
<reference key="4">
    <citation type="journal article" date="2005" name="Biol. Pharm. Bull.">
        <title>Sialobiology of influenza: molecular mechanism of host range variation of influenza viruses.</title>
        <authorList>
            <person name="Suzuki Y."/>
        </authorList>
    </citation>
    <scope>REVIEW</scope>
</reference>
<name>NRAM_I83A5</name>
<dbReference type="EC" id="3.2.1.18" evidence="1"/>
<dbReference type="EMBL" id="CY015075">
    <property type="protein sequence ID" value="ABI85098.1"/>
    <property type="molecule type" value="Genomic_RNA"/>
</dbReference>
<dbReference type="SMR" id="Q0A2I4"/>
<dbReference type="CAZy" id="GH34">
    <property type="family name" value="Glycoside Hydrolase Family 34"/>
</dbReference>
<dbReference type="GlyCosmos" id="Q0A2I4">
    <property type="glycosylation" value="8 sites, No reported glycans"/>
</dbReference>
<dbReference type="PRO" id="PR:Q0A2I4"/>
<dbReference type="Proteomes" id="UP000008584">
    <property type="component" value="Genome"/>
</dbReference>
<dbReference type="GO" id="GO:0020002">
    <property type="term" value="C:host cell plasma membrane"/>
    <property type="evidence" value="ECO:0007669"/>
    <property type="project" value="UniProtKB-SubCell"/>
</dbReference>
<dbReference type="GO" id="GO:0016020">
    <property type="term" value="C:membrane"/>
    <property type="evidence" value="ECO:0007669"/>
    <property type="project" value="UniProtKB-UniRule"/>
</dbReference>
<dbReference type="GO" id="GO:0055036">
    <property type="term" value="C:virion membrane"/>
    <property type="evidence" value="ECO:0007669"/>
    <property type="project" value="UniProtKB-SubCell"/>
</dbReference>
<dbReference type="GO" id="GO:0004308">
    <property type="term" value="F:exo-alpha-sialidase activity"/>
    <property type="evidence" value="ECO:0007669"/>
    <property type="project" value="UniProtKB-UniRule"/>
</dbReference>
<dbReference type="GO" id="GO:0046872">
    <property type="term" value="F:metal ion binding"/>
    <property type="evidence" value="ECO:0007669"/>
    <property type="project" value="UniProtKB-UniRule"/>
</dbReference>
<dbReference type="GO" id="GO:0005975">
    <property type="term" value="P:carbohydrate metabolic process"/>
    <property type="evidence" value="ECO:0007669"/>
    <property type="project" value="InterPro"/>
</dbReference>
<dbReference type="GO" id="GO:0046761">
    <property type="term" value="P:viral budding from plasma membrane"/>
    <property type="evidence" value="ECO:0007669"/>
    <property type="project" value="UniProtKB-UniRule"/>
</dbReference>
<dbReference type="CDD" id="cd15483">
    <property type="entry name" value="Influenza_NA"/>
    <property type="match status" value="1"/>
</dbReference>
<dbReference type="Gene3D" id="2.120.10.10">
    <property type="match status" value="1"/>
</dbReference>
<dbReference type="HAMAP" id="MF_04071">
    <property type="entry name" value="INFV_NRAM"/>
    <property type="match status" value="1"/>
</dbReference>
<dbReference type="InterPro" id="IPR001860">
    <property type="entry name" value="Glyco_hydro_34"/>
</dbReference>
<dbReference type="InterPro" id="IPR033654">
    <property type="entry name" value="Sialidase_Influenza_A/B"/>
</dbReference>
<dbReference type="InterPro" id="IPR036278">
    <property type="entry name" value="Sialidase_sf"/>
</dbReference>
<dbReference type="Pfam" id="PF00064">
    <property type="entry name" value="Neur"/>
    <property type="match status" value="1"/>
</dbReference>
<dbReference type="SUPFAM" id="SSF50939">
    <property type="entry name" value="Sialidases"/>
    <property type="match status" value="1"/>
</dbReference>
<organismHost>
    <name type="scientific">Aves</name>
    <dbReference type="NCBI Taxonomy" id="8782"/>
</organismHost>
<keyword id="KW-0106">Calcium</keyword>
<keyword id="KW-1015">Disulfide bond</keyword>
<keyword id="KW-0325">Glycoprotein</keyword>
<keyword id="KW-0326">Glycosidase</keyword>
<keyword id="KW-1032">Host cell membrane</keyword>
<keyword id="KW-1043">Host membrane</keyword>
<keyword id="KW-0378">Hydrolase</keyword>
<keyword id="KW-0472">Membrane</keyword>
<keyword id="KW-0479">Metal-binding</keyword>
<keyword id="KW-0735">Signal-anchor</keyword>
<keyword id="KW-0812">Transmembrane</keyword>
<keyword id="KW-1133">Transmembrane helix</keyword>
<keyword id="KW-0946">Virion</keyword>
<gene>
    <name evidence="1" type="primary">NA</name>
</gene>
<accession>Q0A2I4</accession>
<comment type="function">
    <text evidence="1">Catalyzes the removal of terminal sialic acid residues from viral and cellular glycoconjugates. Cleaves off the terminal sialic acids on the glycosylated HA during virus budding to facilitate virus release. Additionally helps virus spread through the circulation by further removing sialic acids from the cell surface. These cleavages prevent self-aggregation and ensure the efficient spread of the progeny virus from cell to cell. Otherwise, infection would be limited to one round of replication. Described as a receptor-destroying enzyme because it cleaves a terminal sialic acid from the cellular receptors. May facilitate viral invasion of the upper airways by cleaving the sialic acid moieties on the mucin of the airway epithelial cells. Likely to plays a role in the budding process through its association with lipid rafts during intracellular transport. May additionally display a raft-association independent effect on budding. Plays a role in the determination of host range restriction on replication and virulence. Sialidase activity in late endosome/lysosome traffic seems to enhance virus replication.</text>
</comment>
<comment type="catalytic activity">
    <reaction evidence="1">
        <text>Hydrolysis of alpha-(2-&gt;3)-, alpha-(2-&gt;6)-, alpha-(2-&gt;8)- glycosidic linkages of terminal sialic acid residues in oligosaccharides, glycoproteins, glycolipids, colominic acid and synthetic substrates.</text>
        <dbReference type="EC" id="3.2.1.18"/>
    </reaction>
</comment>
<comment type="cofactor">
    <cofactor evidence="1">
        <name>Ca(2+)</name>
        <dbReference type="ChEBI" id="CHEBI:29108"/>
    </cofactor>
</comment>
<comment type="activity regulation">
    <text evidence="1">Inhibited by the neuraminidase inhibitors zanamivir (Relenza) and oseltamivir (Tamiflu). These drugs interfere with the release of progeny virus from infected cells and are effective against all influenza strains. Resistance to neuraminidase inhibitors is quite rare.</text>
</comment>
<comment type="subunit">
    <text evidence="1">Homotetramer.</text>
</comment>
<comment type="subcellular location">
    <subcellularLocation>
        <location evidence="1">Virion membrane</location>
    </subcellularLocation>
    <subcellularLocation>
        <location evidence="1">Host apical cell membrane</location>
        <topology evidence="1">Single-pass type II membrane protein</topology>
    </subcellularLocation>
    <text evidence="1">Preferentially accumulates at the apical plasma membrane in infected polarized epithelial cells, which is the virus assembly site. Uses lipid rafts for cell surface transport and apical sorting. In the virion, forms a mushroom-shaped spike on the surface of the membrane.</text>
</comment>
<comment type="domain">
    <text evidence="1">Intact N-terminus is essential for virion morphogenesis. Possesses two apical sorting signals, one in the ectodomain, which is likely to be a glycan, and the other in the transmembrane domain. The transmembrane domain also plays a role in lipid raft association.</text>
</comment>
<comment type="PTM">
    <text evidence="1">N-glycosylated.</text>
</comment>
<comment type="miscellaneous">
    <text>The influenza A genome consist of 8 RNA segments. Genetic variation of hemagglutinin and/or neuraminidase genes results in the emergence of new influenza strains. The mechanism of variation can be the result of point mutations or the result of genetic reassortment between segments of two different strains.</text>
</comment>
<comment type="similarity">
    <text evidence="1">Belongs to the glycosyl hydrolase 34 family.</text>
</comment>
<feature type="chain" id="PRO_0000280124" description="Neuraminidase">
    <location>
        <begin position="1"/>
        <end position="449"/>
    </location>
</feature>
<feature type="topological domain" description="Intravirion" evidence="1">
    <location>
        <begin position="1"/>
        <end position="6"/>
    </location>
</feature>
<feature type="transmembrane region" description="Helical" evidence="1">
    <location>
        <begin position="7"/>
        <end position="29"/>
    </location>
</feature>
<feature type="topological domain" description="Virion surface" evidence="1">
    <location>
        <begin position="30"/>
        <end position="449"/>
    </location>
</feature>
<feature type="region of interest" description="Involved in apical transport and lipid raft association" evidence="1">
    <location>
        <begin position="11"/>
        <end position="33"/>
    </location>
</feature>
<feature type="region of interest" description="Hypervariable stalk region" evidence="1">
    <location>
        <begin position="36"/>
        <end position="68"/>
    </location>
</feature>
<feature type="region of interest" description="Head of neuraminidase" evidence="1">
    <location>
        <begin position="71"/>
        <end position="449"/>
    </location>
</feature>
<feature type="region of interest" description="Disordered" evidence="2">
    <location>
        <begin position="305"/>
        <end position="330"/>
    </location>
</feature>
<feature type="active site" description="Proton donor/acceptor" evidence="1">
    <location>
        <position position="131"/>
    </location>
</feature>
<feature type="active site" description="Nucleophile" evidence="1">
    <location>
        <position position="386"/>
    </location>
</feature>
<feature type="binding site" evidence="1">
    <location>
        <position position="98"/>
    </location>
    <ligand>
        <name>substrate</name>
    </ligand>
</feature>
<feature type="binding site" evidence="1">
    <location>
        <position position="132"/>
    </location>
    <ligand>
        <name>substrate</name>
    </ligand>
</feature>
<feature type="binding site" evidence="1">
    <location>
        <begin position="256"/>
        <end position="257"/>
    </location>
    <ligand>
        <name>substrate</name>
    </ligand>
</feature>
<feature type="binding site" evidence="1">
    <location>
        <position position="272"/>
    </location>
    <ligand>
        <name>substrate</name>
    </ligand>
</feature>
<feature type="binding site" evidence="1">
    <location>
        <position position="273"/>
    </location>
    <ligand>
        <name>Ca(2+)</name>
        <dbReference type="ChEBI" id="CHEBI:29108"/>
    </ligand>
</feature>
<feature type="binding site" evidence="1">
    <location>
        <position position="277"/>
    </location>
    <ligand>
        <name>Ca(2+)</name>
        <dbReference type="ChEBI" id="CHEBI:29108"/>
    </ligand>
</feature>
<feature type="binding site" evidence="1">
    <location>
        <position position="304"/>
    </location>
    <ligand>
        <name>Ca(2+)</name>
        <dbReference type="ChEBI" id="CHEBI:29108"/>
    </ligand>
</feature>
<feature type="binding site" evidence="1">
    <location>
        <position position="351"/>
    </location>
    <ligand>
        <name>substrate</name>
    </ligand>
</feature>
<feature type="glycosylation site" description="N-linked (GlcNAc...) asparagine; by host" evidence="1">
    <location>
        <position position="32"/>
    </location>
</feature>
<feature type="glycosylation site" description="N-linked (GlcNAc...) asparagine; by host" evidence="1">
    <location>
        <position position="48"/>
    </location>
</feature>
<feature type="glycosylation site" description="N-linked (GlcNAc...) asparagine; by host" evidence="1">
    <location>
        <position position="66"/>
    </location>
</feature>
<feature type="glycosylation site" description="N-linked (GlcNAc...) asparagine; by host" evidence="1">
    <location>
        <position position="123"/>
    </location>
</feature>
<feature type="glycosylation site" description="N-linked (GlcNAc...) asparagine; by host" evidence="1">
    <location>
        <position position="126"/>
    </location>
</feature>
<feature type="glycosylation site" description="N-linked (GlcNAc...) asparagine; by host" evidence="1">
    <location>
        <position position="180"/>
    </location>
</feature>
<feature type="glycosylation site" description="N-linked (GlcNAc...) asparagine; by host" evidence="1">
    <location>
        <position position="214"/>
    </location>
</feature>
<feature type="glycosylation site" description="N-linked (GlcNAc...) asparagine; by host" evidence="1">
    <location>
        <position position="382"/>
    </location>
</feature>
<feature type="disulfide bond" evidence="1">
    <location>
        <begin position="72"/>
        <end position="397"/>
    </location>
</feature>
<feature type="disulfide bond" evidence="1">
    <location>
        <begin position="104"/>
        <end position="109"/>
    </location>
</feature>
<feature type="disulfide bond" evidence="1">
    <location>
        <begin position="163"/>
        <end position="210"/>
    </location>
</feature>
<feature type="disulfide bond" evidence="1">
    <location>
        <begin position="212"/>
        <end position="217"/>
    </location>
</feature>
<feature type="disulfide bond" evidence="1">
    <location>
        <begin position="258"/>
        <end position="271"/>
    </location>
</feature>
<feature type="disulfide bond" evidence="1">
    <location>
        <begin position="260"/>
        <end position="269"/>
    </location>
</feature>
<feature type="disulfide bond" evidence="1">
    <location>
        <begin position="298"/>
        <end position="317"/>
    </location>
</feature>
<feature type="disulfide bond" evidence="1">
    <location>
        <begin position="401"/>
        <end position="427"/>
    </location>
</feature>
<protein>
    <recommendedName>
        <fullName evidence="1">Neuraminidase</fullName>
        <ecNumber evidence="1">3.2.1.18</ecNumber>
    </recommendedName>
</protein>
<organism>
    <name type="scientific">Influenza A virus (strain A/Chicken/Pennsylvania/1/1983 H5N2)</name>
    <dbReference type="NCBI Taxonomy" id="385586"/>
    <lineage>
        <taxon>Viruses</taxon>
        <taxon>Riboviria</taxon>
        <taxon>Orthornavirae</taxon>
        <taxon>Negarnaviricota</taxon>
        <taxon>Polyploviricotina</taxon>
        <taxon>Insthoviricetes</taxon>
        <taxon>Articulavirales</taxon>
        <taxon>Orthomyxoviridae</taxon>
        <taxon>Alphainfluenzavirus</taxon>
        <taxon>Alphainfluenzavirus influenzae</taxon>
        <taxon>Influenza A virus</taxon>
    </lineage>
</organism>
<sequence>MNPNQKIITIGSVSLTIATVCFLMQIAILATNVTLHFRQNERSIPAYNQTTPCKPIIIERNIKYRNWSKPQCQITGFAPFSKDNSIRLSAGGGIWVTREPYVSCDPSKCYQFALGQGTTLDNNHSNGTIHDRTPHRTLLMNELGVPFHLGTRQVCIAWSSSSCHDGKAWLHVCVTGDDRNATASFIYNGMLVDSIGSWSQNILRTQESECVCINGTCTVVMTDGSASGKADIRILFIREGKIVHISPLSGSAQHIEECSCYPRYPNVRCVCRDNWKGSNRPVIDINMADYSIDSSYVCSGLVGDTPRNDDSSSSSNCRDPNNERGNPGVKGWAFDIGDDVWMGRTISKDSRSGYETFRVIGGWATANSKSQTNRQVIVDNNNWSGYSGIFSVESKSCINRCFYVELIRGRPQETRVWWTSNSIVVFCGTSGTYGTGSWPDGANINFMPL</sequence>